<organism>
    <name type="scientific">Nitrosococcus oceani (strain ATCC 19707 / BCRC 17464 / JCM 30415 / NCIMB 11848 / C-107)</name>
    <dbReference type="NCBI Taxonomy" id="323261"/>
    <lineage>
        <taxon>Bacteria</taxon>
        <taxon>Pseudomonadati</taxon>
        <taxon>Pseudomonadota</taxon>
        <taxon>Gammaproteobacteria</taxon>
        <taxon>Chromatiales</taxon>
        <taxon>Chromatiaceae</taxon>
        <taxon>Nitrosococcus</taxon>
    </lineage>
</organism>
<sequence length="167" mass="18880">MAILNILHYPDPRLRRKAQPVAAVDKSIKKLADDMLETMYQAPGIGLAAVQVNVPKQVVVIDISEDKSSPLVLINPEIVARQGKAESEEGCLSVPEIFEPVTRAAEITVHYLDREGQKQELQTQELLATCIQHELDHLEGKLFIDYFSTLKRQRIRKKAEKRQRLSA</sequence>
<name>DEF_NITOC</name>
<keyword id="KW-0378">Hydrolase</keyword>
<keyword id="KW-0408">Iron</keyword>
<keyword id="KW-0479">Metal-binding</keyword>
<keyword id="KW-0648">Protein biosynthesis</keyword>
<keyword id="KW-1185">Reference proteome</keyword>
<comment type="function">
    <text evidence="1">Removes the formyl group from the N-terminal Met of newly synthesized proteins. Requires at least a dipeptide for an efficient rate of reaction. N-terminal L-methionine is a prerequisite for activity but the enzyme has broad specificity at other positions.</text>
</comment>
<comment type="catalytic activity">
    <reaction evidence="1">
        <text>N-terminal N-formyl-L-methionyl-[peptide] + H2O = N-terminal L-methionyl-[peptide] + formate</text>
        <dbReference type="Rhea" id="RHEA:24420"/>
        <dbReference type="Rhea" id="RHEA-COMP:10639"/>
        <dbReference type="Rhea" id="RHEA-COMP:10640"/>
        <dbReference type="ChEBI" id="CHEBI:15377"/>
        <dbReference type="ChEBI" id="CHEBI:15740"/>
        <dbReference type="ChEBI" id="CHEBI:49298"/>
        <dbReference type="ChEBI" id="CHEBI:64731"/>
        <dbReference type="EC" id="3.5.1.88"/>
    </reaction>
</comment>
<comment type="cofactor">
    <cofactor evidence="1">
        <name>Fe(2+)</name>
        <dbReference type="ChEBI" id="CHEBI:29033"/>
    </cofactor>
    <text evidence="1">Binds 1 Fe(2+) ion.</text>
</comment>
<comment type="similarity">
    <text evidence="1">Belongs to the polypeptide deformylase family.</text>
</comment>
<reference key="1">
    <citation type="journal article" date="2006" name="Appl. Environ. Microbiol.">
        <title>Complete genome sequence of the marine, chemolithoautotrophic, ammonia-oxidizing bacterium Nitrosococcus oceani ATCC 19707.</title>
        <authorList>
            <person name="Klotz M.G."/>
            <person name="Arp D.J."/>
            <person name="Chain P.S.G."/>
            <person name="El-Sheikh A.F."/>
            <person name="Hauser L.J."/>
            <person name="Hommes N.G."/>
            <person name="Larimer F.W."/>
            <person name="Malfatti S.A."/>
            <person name="Norton J.M."/>
            <person name="Poret-Peterson A.T."/>
            <person name="Vergez L.M."/>
            <person name="Ward B.B."/>
        </authorList>
    </citation>
    <scope>NUCLEOTIDE SEQUENCE [LARGE SCALE GENOMIC DNA]</scope>
    <source>
        <strain>ATCC 19707 / BCRC 17464 / JCM 30415 / NCIMB 11848 / C-107</strain>
    </source>
</reference>
<evidence type="ECO:0000255" key="1">
    <source>
        <dbReference type="HAMAP-Rule" id="MF_00163"/>
    </source>
</evidence>
<protein>
    <recommendedName>
        <fullName evidence="1">Peptide deformylase</fullName>
        <shortName evidence="1">PDF</shortName>
        <ecNumber evidence="1">3.5.1.88</ecNumber>
    </recommendedName>
    <alternativeName>
        <fullName evidence="1">Polypeptide deformylase</fullName>
    </alternativeName>
</protein>
<gene>
    <name evidence="1" type="primary">def</name>
    <name type="ordered locus">Noc_3014</name>
</gene>
<feature type="chain" id="PRO_0000301070" description="Peptide deformylase">
    <location>
        <begin position="1"/>
        <end position="167"/>
    </location>
</feature>
<feature type="active site" evidence="1">
    <location>
        <position position="134"/>
    </location>
</feature>
<feature type="binding site" evidence="1">
    <location>
        <position position="91"/>
    </location>
    <ligand>
        <name>Fe cation</name>
        <dbReference type="ChEBI" id="CHEBI:24875"/>
    </ligand>
</feature>
<feature type="binding site" evidence="1">
    <location>
        <position position="133"/>
    </location>
    <ligand>
        <name>Fe cation</name>
        <dbReference type="ChEBI" id="CHEBI:24875"/>
    </ligand>
</feature>
<feature type="binding site" evidence="1">
    <location>
        <position position="137"/>
    </location>
    <ligand>
        <name>Fe cation</name>
        <dbReference type="ChEBI" id="CHEBI:24875"/>
    </ligand>
</feature>
<dbReference type="EC" id="3.5.1.88" evidence="1"/>
<dbReference type="EMBL" id="CP000127">
    <property type="protein sequence ID" value="ABA59456.1"/>
    <property type="molecule type" value="Genomic_DNA"/>
</dbReference>
<dbReference type="RefSeq" id="WP_002812590.1">
    <property type="nucleotide sequence ID" value="NC_007484.1"/>
</dbReference>
<dbReference type="SMR" id="Q3J6U0"/>
<dbReference type="FunCoup" id="Q3J6U0">
    <property type="interactions" value="507"/>
</dbReference>
<dbReference type="STRING" id="323261.Noc_3014"/>
<dbReference type="KEGG" id="noc:Noc_3014"/>
<dbReference type="eggNOG" id="COG0242">
    <property type="taxonomic scope" value="Bacteria"/>
</dbReference>
<dbReference type="HOGENOM" id="CLU_061901_2_1_6"/>
<dbReference type="InParanoid" id="Q3J6U0"/>
<dbReference type="Proteomes" id="UP000006838">
    <property type="component" value="Chromosome"/>
</dbReference>
<dbReference type="GO" id="GO:0046872">
    <property type="term" value="F:metal ion binding"/>
    <property type="evidence" value="ECO:0007669"/>
    <property type="project" value="UniProtKB-KW"/>
</dbReference>
<dbReference type="GO" id="GO:0042586">
    <property type="term" value="F:peptide deformylase activity"/>
    <property type="evidence" value="ECO:0007669"/>
    <property type="project" value="UniProtKB-UniRule"/>
</dbReference>
<dbReference type="GO" id="GO:0043686">
    <property type="term" value="P:co-translational protein modification"/>
    <property type="evidence" value="ECO:0007669"/>
    <property type="project" value="TreeGrafter"/>
</dbReference>
<dbReference type="GO" id="GO:0006412">
    <property type="term" value="P:translation"/>
    <property type="evidence" value="ECO:0007669"/>
    <property type="project" value="UniProtKB-UniRule"/>
</dbReference>
<dbReference type="CDD" id="cd00487">
    <property type="entry name" value="Pep_deformylase"/>
    <property type="match status" value="1"/>
</dbReference>
<dbReference type="FunFam" id="3.90.45.10:FF:000001">
    <property type="entry name" value="Peptide deformylase"/>
    <property type="match status" value="1"/>
</dbReference>
<dbReference type="Gene3D" id="3.90.45.10">
    <property type="entry name" value="Peptide deformylase"/>
    <property type="match status" value="1"/>
</dbReference>
<dbReference type="HAMAP" id="MF_00163">
    <property type="entry name" value="Pep_deformylase"/>
    <property type="match status" value="1"/>
</dbReference>
<dbReference type="InterPro" id="IPR023635">
    <property type="entry name" value="Peptide_deformylase"/>
</dbReference>
<dbReference type="InterPro" id="IPR036821">
    <property type="entry name" value="Peptide_deformylase_sf"/>
</dbReference>
<dbReference type="NCBIfam" id="TIGR00079">
    <property type="entry name" value="pept_deformyl"/>
    <property type="match status" value="1"/>
</dbReference>
<dbReference type="NCBIfam" id="NF001159">
    <property type="entry name" value="PRK00150.1-3"/>
    <property type="match status" value="1"/>
</dbReference>
<dbReference type="PANTHER" id="PTHR10458">
    <property type="entry name" value="PEPTIDE DEFORMYLASE"/>
    <property type="match status" value="1"/>
</dbReference>
<dbReference type="PANTHER" id="PTHR10458:SF21">
    <property type="entry name" value="PEPTIDE DEFORMYLASE"/>
    <property type="match status" value="1"/>
</dbReference>
<dbReference type="Pfam" id="PF01327">
    <property type="entry name" value="Pep_deformylase"/>
    <property type="match status" value="1"/>
</dbReference>
<dbReference type="PIRSF" id="PIRSF004749">
    <property type="entry name" value="Pep_def"/>
    <property type="match status" value="1"/>
</dbReference>
<dbReference type="PRINTS" id="PR01576">
    <property type="entry name" value="PDEFORMYLASE"/>
</dbReference>
<dbReference type="SUPFAM" id="SSF56420">
    <property type="entry name" value="Peptide deformylase"/>
    <property type="match status" value="1"/>
</dbReference>
<proteinExistence type="inferred from homology"/>
<accession>Q3J6U0</accession>